<name>NK_METTH</name>
<gene>
    <name type="ordered locus">MTH_1544</name>
</gene>
<organism>
    <name type="scientific">Methanothermobacter thermautotrophicus (strain ATCC 29096 / DSM 1053 / JCM 10044 / NBRC 100330 / Delta H)</name>
    <name type="common">Methanobacterium thermoautotrophicum</name>
    <dbReference type="NCBI Taxonomy" id="187420"/>
    <lineage>
        <taxon>Archaea</taxon>
        <taxon>Methanobacteriati</taxon>
        <taxon>Methanobacteriota</taxon>
        <taxon>Methanomada group</taxon>
        <taxon>Methanobacteria</taxon>
        <taxon>Methanobacteriales</taxon>
        <taxon>Methanobacteriaceae</taxon>
        <taxon>Methanothermobacter</taxon>
    </lineage>
</organism>
<dbReference type="EC" id="2.7.1.-" evidence="1"/>
<dbReference type="EMBL" id="AE000666">
    <property type="protein sequence ID" value="AAB86018.1"/>
    <property type="molecule type" value="Genomic_DNA"/>
</dbReference>
<dbReference type="PIR" id="A69073">
    <property type="entry name" value="A69073"/>
</dbReference>
<dbReference type="RefSeq" id="WP_010877153.1">
    <property type="nucleotide sequence ID" value="NC_000916.1"/>
</dbReference>
<dbReference type="SMR" id="O27587"/>
<dbReference type="FunCoup" id="O27587">
    <property type="interactions" value="96"/>
</dbReference>
<dbReference type="STRING" id="187420.MTH_1544"/>
<dbReference type="PaxDb" id="187420-MTH_1544"/>
<dbReference type="EnsemblBacteria" id="AAB86018">
    <property type="protein sequence ID" value="AAB86018"/>
    <property type="gene ID" value="MTH_1544"/>
</dbReference>
<dbReference type="GeneID" id="1471813"/>
<dbReference type="KEGG" id="mth:MTH_1544"/>
<dbReference type="PATRIC" id="fig|187420.15.peg.1507"/>
<dbReference type="HOGENOM" id="CLU_027634_5_2_2"/>
<dbReference type="InParanoid" id="O27587"/>
<dbReference type="Proteomes" id="UP000005223">
    <property type="component" value="Chromosome"/>
</dbReference>
<dbReference type="GO" id="GO:0005524">
    <property type="term" value="F:ATP binding"/>
    <property type="evidence" value="ECO:0007669"/>
    <property type="project" value="UniProtKB-KW"/>
</dbReference>
<dbReference type="GO" id="GO:0016301">
    <property type="term" value="F:kinase activity"/>
    <property type="evidence" value="ECO:0007669"/>
    <property type="project" value="UniProtKB-KW"/>
</dbReference>
<dbReference type="GO" id="GO:0006796">
    <property type="term" value="P:phosphate-containing compound metabolic process"/>
    <property type="evidence" value="ECO:0007669"/>
    <property type="project" value="UniProtKB-ARBA"/>
</dbReference>
<dbReference type="CDD" id="cd01942">
    <property type="entry name" value="ribokinase_group_A"/>
    <property type="match status" value="1"/>
</dbReference>
<dbReference type="Gene3D" id="3.40.1190.20">
    <property type="match status" value="1"/>
</dbReference>
<dbReference type="InterPro" id="IPR002173">
    <property type="entry name" value="Carboh/pur_kinase_PfkB_CS"/>
</dbReference>
<dbReference type="InterPro" id="IPR011611">
    <property type="entry name" value="PfkB_dom"/>
</dbReference>
<dbReference type="InterPro" id="IPR002139">
    <property type="entry name" value="Ribo/fructo_kinase"/>
</dbReference>
<dbReference type="InterPro" id="IPR029056">
    <property type="entry name" value="Ribokinase-like"/>
</dbReference>
<dbReference type="PANTHER" id="PTHR10584:SF166">
    <property type="entry name" value="RIBOKINASE"/>
    <property type="match status" value="1"/>
</dbReference>
<dbReference type="PANTHER" id="PTHR10584">
    <property type="entry name" value="SUGAR KINASE"/>
    <property type="match status" value="1"/>
</dbReference>
<dbReference type="Pfam" id="PF00294">
    <property type="entry name" value="PfkB"/>
    <property type="match status" value="1"/>
</dbReference>
<dbReference type="PRINTS" id="PR00990">
    <property type="entry name" value="RIBOKINASE"/>
</dbReference>
<dbReference type="SUPFAM" id="SSF53613">
    <property type="entry name" value="Ribokinase-like"/>
    <property type="match status" value="1"/>
</dbReference>
<dbReference type="PROSITE" id="PS00583">
    <property type="entry name" value="PFKB_KINASES_1"/>
    <property type="match status" value="1"/>
</dbReference>
<dbReference type="PROSITE" id="PS00584">
    <property type="entry name" value="PFKB_KINASES_2"/>
    <property type="match status" value="1"/>
</dbReference>
<reference key="1">
    <citation type="journal article" date="1997" name="J. Bacteriol.">
        <title>Complete genome sequence of Methanobacterium thermoautotrophicum deltaH: functional analysis and comparative genomics.</title>
        <authorList>
            <person name="Smith D.R."/>
            <person name="Doucette-Stamm L.A."/>
            <person name="Deloughery C."/>
            <person name="Lee H.-M."/>
            <person name="Dubois J."/>
            <person name="Aldredge T."/>
            <person name="Bashirzadeh R."/>
            <person name="Blakely D."/>
            <person name="Cook R."/>
            <person name="Gilbert K."/>
            <person name="Harrison D."/>
            <person name="Hoang L."/>
            <person name="Keagle P."/>
            <person name="Lumm W."/>
            <person name="Pothier B."/>
            <person name="Qiu D."/>
            <person name="Spadafora R."/>
            <person name="Vicare R."/>
            <person name="Wang Y."/>
            <person name="Wierzbowski J."/>
            <person name="Gibson R."/>
            <person name="Jiwani N."/>
            <person name="Caruso A."/>
            <person name="Bush D."/>
            <person name="Safer H."/>
            <person name="Patwell D."/>
            <person name="Prabhakar S."/>
            <person name="McDougall S."/>
            <person name="Shimer G."/>
            <person name="Goyal A."/>
            <person name="Pietrovski S."/>
            <person name="Church G.M."/>
            <person name="Daniels C.J."/>
            <person name="Mao J.-I."/>
            <person name="Rice P."/>
            <person name="Noelling J."/>
            <person name="Reeve J.N."/>
        </authorList>
    </citation>
    <scope>NUCLEOTIDE SEQUENCE [LARGE SCALE GENOMIC DNA]</scope>
    <source>
        <strain>ATCC 29096 / DSM 1053 / JCM 10044 / NBRC 100330 / Delta H</strain>
    </source>
</reference>
<proteinExistence type="inferred from homology"/>
<accession>O27587</accession>
<keyword id="KW-0067">ATP-binding</keyword>
<keyword id="KW-0418">Kinase</keyword>
<keyword id="KW-0547">Nucleotide-binding</keyword>
<keyword id="KW-1185">Reference proteome</keyword>
<keyword id="KW-0808">Transferase</keyword>
<sequence>MSEDRDLLAVGHTAFDYIIHLDEFPEPNTSTAIKRMRNLHGGAAANVALVGSRLGLRTSLVSAVGGDFEGSEYRELLESSGIDIESMILVADESTPTAFVMTDSDHNQISYFYWGAARYFKDAETPADAIKSARAVHLATGDPSFNCRCGEFARSLGKIISFDPGQDLHMYSRSQLERAVGVCDILFGNHHEIDRICSKLSVDIHGLREMGPGVVVKTYGKEGSIIYSDDVIKIDAIPREAVDPTGAGDSYRAGFMRAYLRGADLKTCGRFASAVASFIVEDEGTQTNIPDTGEAVKRFTAQWGYEPPI</sequence>
<protein>
    <recommendedName>
        <fullName evidence="1">Nucleoside kinase</fullName>
        <shortName evidence="1">NK</shortName>
        <ecNumber evidence="1">2.7.1.-</ecNumber>
    </recommendedName>
</protein>
<feature type="chain" id="PRO_0000080154" description="Nucleoside kinase">
    <location>
        <begin position="1"/>
        <end position="309"/>
    </location>
</feature>
<feature type="active site" description="Proton acceptor" evidence="1">
    <location>
        <position position="249"/>
    </location>
</feature>
<feature type="binding site" evidence="1">
    <location>
        <position position="16"/>
    </location>
    <ligand>
        <name>substrate</name>
    </ligand>
</feature>
<feature type="binding site" evidence="1">
    <location>
        <position position="42"/>
    </location>
    <ligand>
        <name>substrate</name>
    </ligand>
</feature>
<feature type="binding site" evidence="1">
    <location>
        <position position="46"/>
    </location>
    <ligand>
        <name>substrate</name>
    </ligand>
</feature>
<feature type="binding site" evidence="1">
    <location>
        <position position="108"/>
    </location>
    <ligand>
        <name>ATP</name>
        <dbReference type="ChEBI" id="CHEBI:30616"/>
    </ligand>
</feature>
<feature type="binding site" evidence="1">
    <location>
        <begin position="110"/>
        <end position="112"/>
    </location>
    <ligand>
        <name>substrate</name>
    </ligand>
</feature>
<feature type="binding site" evidence="1">
    <location>
        <position position="166"/>
    </location>
    <ligand>
        <name>substrate</name>
    </ligand>
</feature>
<feature type="binding site" evidence="1">
    <location>
        <position position="189"/>
    </location>
    <ligand>
        <name>ATP</name>
        <dbReference type="ChEBI" id="CHEBI:30616"/>
    </ligand>
</feature>
<feature type="binding site" evidence="1">
    <location>
        <begin position="217"/>
        <end position="223"/>
    </location>
    <ligand>
        <name>ATP</name>
        <dbReference type="ChEBI" id="CHEBI:30616"/>
    </ligand>
</feature>
<feature type="binding site" evidence="1">
    <location>
        <position position="249"/>
    </location>
    <ligand>
        <name>substrate</name>
    </ligand>
</feature>
<feature type="site" description="Transition state stabilizer" evidence="1">
    <location>
        <position position="252"/>
    </location>
</feature>
<evidence type="ECO:0000250" key="1">
    <source>
        <dbReference type="UniProtKB" id="Q57849"/>
    </source>
</evidence>
<evidence type="ECO:0000305" key="2"/>
<comment type="function">
    <text evidence="1">Catalyzes the phosphorylation of a wide range of nucleosides to yield nucleoside monophosphates, using ATP, ITP or GTP as phosphate donor.</text>
</comment>
<comment type="cofactor">
    <cofactor evidence="1">
        <name>Mg(2+)</name>
        <dbReference type="ChEBI" id="CHEBI:18420"/>
    </cofactor>
</comment>
<comment type="subunit">
    <text evidence="1">Homodimer.</text>
</comment>
<comment type="similarity">
    <text evidence="2">Belongs to the carbohydrate kinase PfkB family.</text>
</comment>